<comment type="function">
    <text evidence="1">Catalyzes the removal of terminal sialic acid residues from viral and cellular glycoconjugates. Cleaves off the terminal sialic acids on the glycosylated HA during virus budding to facilitate virus release. Additionally helps virus spread through the circulation by further removing sialic acids from the cell surface. These cleavages prevent self-aggregation and ensure the efficient spread of the progeny virus from cell to cell. Otherwise, infection would be limited to one round of replication. Described as a receptor-destroying enzyme because it cleaves a terminal sialic acid from the cellular receptors. May facilitate viral invasion of the upper airways by cleaving the sialic acid moieties on the mucin of the airway epithelial cells. Likely to plays a role in the budding process through its association with lipid rafts during intracellular transport. May additionally display a raft-association independent effect on budding. Plays a role in the determination of host range restriction on replication and virulence. Sialidase activity in late endosome/lysosome traffic seems to enhance virus replication.</text>
</comment>
<comment type="catalytic activity">
    <reaction evidence="1">
        <text>Hydrolysis of alpha-(2-&gt;3)-, alpha-(2-&gt;6)-, alpha-(2-&gt;8)- glycosidic linkages of terminal sialic acid residues in oligosaccharides, glycoproteins, glycolipids, colominic acid and synthetic substrates.</text>
        <dbReference type="EC" id="3.2.1.18"/>
    </reaction>
</comment>
<comment type="cofactor">
    <cofactor evidence="1">
        <name>Ca(2+)</name>
        <dbReference type="ChEBI" id="CHEBI:29108"/>
    </cofactor>
</comment>
<comment type="activity regulation">
    <text evidence="1">Inhibited by the neuraminidase inhibitors zanamivir (Relenza) and oseltamivir (Tamiflu). These drugs interfere with the release of progeny virus from infected cells and are effective against all influenza strains. Resistance to neuraminidase inhibitors is quite rare.</text>
</comment>
<comment type="subunit">
    <text evidence="1">Homotetramer.</text>
</comment>
<comment type="subcellular location">
    <subcellularLocation>
        <location evidence="1">Virion membrane</location>
    </subcellularLocation>
    <subcellularLocation>
        <location evidence="1">Host apical cell membrane</location>
        <topology evidence="1">Single-pass type II membrane protein</topology>
    </subcellularLocation>
    <text evidence="1">Preferentially accumulates at the apical plasma membrane in infected polarized epithelial cells, which is the virus assembly site. Uses lipid rafts for cell surface transport and apical sorting. In the virion, forms a mushroom-shaped spike on the surface of the membrane.</text>
</comment>
<comment type="domain">
    <text evidence="1">Intact N-terminus is essential for virion morphogenesis. Possesses two apical sorting signals, one in the ectodomain, which is likely to be a glycan, and the other in the transmembrane domain. The transmembrane domain also plays a role in lipid raft association.</text>
</comment>
<comment type="PTM">
    <text evidence="1">N-glycosylated.</text>
</comment>
<comment type="miscellaneous">
    <text>The influenza A genome consist of 8 RNA segments. Genetic variation of hemagglutinin and/or neuraminidase genes results in the emergence of new influenza strains. The mechanism of variation can be the result of point mutations or the result of genetic reassortment between segments of two different strains.</text>
</comment>
<comment type="similarity">
    <text evidence="1">Belongs to the glycosyl hydrolase 34 family.</text>
</comment>
<dbReference type="EC" id="3.2.1.18" evidence="1"/>
<dbReference type="EMBL" id="K01150">
    <property type="protein sequence ID" value="AAA43386.1"/>
    <property type="molecule type" value="Genomic_RNA"/>
</dbReference>
<dbReference type="SMR" id="P06818"/>
<dbReference type="DrugBank" id="DB06614">
    <property type="generic name" value="Peramivir"/>
</dbReference>
<dbReference type="DrugBank" id="DB00558">
    <property type="generic name" value="Zanamivir"/>
</dbReference>
<dbReference type="DrugCentral" id="P06818"/>
<dbReference type="CAZy" id="GH34">
    <property type="family name" value="Glycoside Hydrolase Family 34"/>
</dbReference>
<dbReference type="GlyCosmos" id="P06818">
    <property type="glycosylation" value="7 sites, No reported glycans"/>
</dbReference>
<dbReference type="GO" id="GO:0020002">
    <property type="term" value="C:host cell plasma membrane"/>
    <property type="evidence" value="ECO:0007669"/>
    <property type="project" value="UniProtKB-SubCell"/>
</dbReference>
<dbReference type="GO" id="GO:0016020">
    <property type="term" value="C:membrane"/>
    <property type="evidence" value="ECO:0007669"/>
    <property type="project" value="UniProtKB-UniRule"/>
</dbReference>
<dbReference type="GO" id="GO:0055036">
    <property type="term" value="C:virion membrane"/>
    <property type="evidence" value="ECO:0007669"/>
    <property type="project" value="UniProtKB-SubCell"/>
</dbReference>
<dbReference type="GO" id="GO:0004308">
    <property type="term" value="F:exo-alpha-sialidase activity"/>
    <property type="evidence" value="ECO:0007669"/>
    <property type="project" value="UniProtKB-UniRule"/>
</dbReference>
<dbReference type="GO" id="GO:0046872">
    <property type="term" value="F:metal ion binding"/>
    <property type="evidence" value="ECO:0007669"/>
    <property type="project" value="UniProtKB-UniRule"/>
</dbReference>
<dbReference type="GO" id="GO:0005975">
    <property type="term" value="P:carbohydrate metabolic process"/>
    <property type="evidence" value="ECO:0007669"/>
    <property type="project" value="InterPro"/>
</dbReference>
<dbReference type="GO" id="GO:0046761">
    <property type="term" value="P:viral budding from plasma membrane"/>
    <property type="evidence" value="ECO:0007669"/>
    <property type="project" value="UniProtKB-UniRule"/>
</dbReference>
<dbReference type="CDD" id="cd15483">
    <property type="entry name" value="Influenza_NA"/>
    <property type="match status" value="1"/>
</dbReference>
<dbReference type="Gene3D" id="2.120.10.10">
    <property type="match status" value="1"/>
</dbReference>
<dbReference type="HAMAP" id="MF_04071">
    <property type="entry name" value="INFV_NRAM"/>
    <property type="match status" value="1"/>
</dbReference>
<dbReference type="InterPro" id="IPR001860">
    <property type="entry name" value="Glyco_hydro_34"/>
</dbReference>
<dbReference type="InterPro" id="IPR033654">
    <property type="entry name" value="Sialidase_Influenza_A/B"/>
</dbReference>
<dbReference type="InterPro" id="IPR036278">
    <property type="entry name" value="Sialidase_sf"/>
</dbReference>
<dbReference type="Pfam" id="PF00064">
    <property type="entry name" value="Neur"/>
    <property type="match status" value="1"/>
</dbReference>
<dbReference type="SUPFAM" id="SSF50939">
    <property type="entry name" value="Sialidases"/>
    <property type="match status" value="1"/>
</dbReference>
<evidence type="ECO:0000255" key="1">
    <source>
        <dbReference type="HAMAP-Rule" id="MF_04071"/>
    </source>
</evidence>
<organismHost>
    <name type="scientific">Aves</name>
    <dbReference type="NCBI Taxonomy" id="8782"/>
</organismHost>
<organismHost>
    <name type="scientific">Cetacea</name>
    <name type="common">whales</name>
    <dbReference type="NCBI Taxonomy" id="9721"/>
</organismHost>
<organismHost>
    <name type="scientific">Homo sapiens</name>
    <name type="common">Human</name>
    <dbReference type="NCBI Taxonomy" id="9606"/>
</organismHost>
<organismHost>
    <name type="scientific">Phocidae</name>
    <name type="common">true seals</name>
    <dbReference type="NCBI Taxonomy" id="9709"/>
</organismHost>
<organismHost>
    <name type="scientific">Sus scrofa</name>
    <name type="common">Pig</name>
    <dbReference type="NCBI Taxonomy" id="9823"/>
</organismHost>
<accession>P06818</accession>
<reference key="1">
    <citation type="journal article" date="1983" name="Virology">
        <title>Evolution of the influenza virus neuraminidase gene during drift of the N2 subtype.</title>
        <authorList>
            <person name="Martinez C."/>
            <person name="del Rio L."/>
            <person name="Portela A."/>
            <person name="Domingo E."/>
            <person name="Ortin J."/>
        </authorList>
    </citation>
    <scope>NUCLEOTIDE SEQUENCE [GENOMIC RNA]</scope>
</reference>
<reference key="2">
    <citation type="journal article" date="2004" name="Virus Res.">
        <title>Assembly and budding of influenza virus.</title>
        <authorList>
            <person name="Nayak D.P."/>
            <person name="Hui E.K."/>
            <person name="Barman S."/>
        </authorList>
    </citation>
    <scope>REVIEW</scope>
</reference>
<reference key="3">
    <citation type="journal article" date="2005" name="N. Engl. J. Med.">
        <title>Neuraminidase inhibitors for influenza.</title>
        <authorList>
            <person name="Moscona A."/>
        </authorList>
    </citation>
    <scope>REVIEW</scope>
</reference>
<reference key="4">
    <citation type="journal article" date="2005" name="Biol. Pharm. Bull.">
        <title>Sialobiology of influenza: molecular mechanism of host range variation of influenza viruses.</title>
        <authorList>
            <person name="Suzuki Y."/>
        </authorList>
    </citation>
    <scope>REVIEW</scope>
</reference>
<organism>
    <name type="scientific">Influenza A virus (strain A/Bangkok/1/1979 H3N2)</name>
    <dbReference type="NCBI Taxonomy" id="385630"/>
    <lineage>
        <taxon>Viruses</taxon>
        <taxon>Riboviria</taxon>
        <taxon>Orthornavirae</taxon>
        <taxon>Negarnaviricota</taxon>
        <taxon>Polyploviricotina</taxon>
        <taxon>Insthoviricetes</taxon>
        <taxon>Articulavirales</taxon>
        <taxon>Orthomyxoviridae</taxon>
        <taxon>Alphainfluenzavirus</taxon>
        <taxon>Alphainfluenzavirus influenzae</taxon>
        <taxon>Influenza A virus</taxon>
    </lineage>
</organism>
<keyword id="KW-0106">Calcium</keyword>
<keyword id="KW-1015">Disulfide bond</keyword>
<keyword id="KW-0325">Glycoprotein</keyword>
<keyword id="KW-0326">Glycosidase</keyword>
<keyword id="KW-1032">Host cell membrane</keyword>
<keyword id="KW-1043">Host membrane</keyword>
<keyword id="KW-0378">Hydrolase</keyword>
<keyword id="KW-0472">Membrane</keyword>
<keyword id="KW-0479">Metal-binding</keyword>
<keyword id="KW-0735">Signal-anchor</keyword>
<keyword id="KW-0812">Transmembrane</keyword>
<keyword id="KW-1133">Transmembrane helix</keyword>
<keyword id="KW-0946">Virion</keyword>
<proteinExistence type="inferred from homology"/>
<gene>
    <name evidence="1" type="primary">NA</name>
</gene>
<protein>
    <recommendedName>
        <fullName evidence="1">Neuraminidase</fullName>
        <ecNumber evidence="1">3.2.1.18</ecNumber>
    </recommendedName>
</protein>
<feature type="chain" id="PRO_0000078676" description="Neuraminidase">
    <location>
        <begin position="1"/>
        <end position="469"/>
    </location>
</feature>
<feature type="topological domain" description="Intravirion" evidence="1">
    <location>
        <begin position="1"/>
        <end position="9"/>
    </location>
</feature>
<feature type="transmembrane region" description="Helical" evidence="1">
    <location>
        <begin position="10"/>
        <end position="30"/>
    </location>
</feature>
<feature type="topological domain" description="Virion surface" evidence="1">
    <location>
        <begin position="31"/>
        <end position="469"/>
    </location>
</feature>
<feature type="region of interest" description="Involved in apical transport and lipid raft association" evidence="1">
    <location>
        <begin position="11"/>
        <end position="33"/>
    </location>
</feature>
<feature type="region of interest" description="Hypervariable stalk region" evidence="1">
    <location>
        <begin position="36"/>
        <end position="88"/>
    </location>
</feature>
<feature type="region of interest" description="Head of neuraminidase" evidence="1">
    <location>
        <begin position="91"/>
        <end position="469"/>
    </location>
</feature>
<feature type="active site" description="Proton donor/acceptor" evidence="1">
    <location>
        <position position="151"/>
    </location>
</feature>
<feature type="active site" description="Nucleophile" evidence="1">
    <location>
        <position position="406"/>
    </location>
</feature>
<feature type="binding site" evidence="1">
    <location>
        <position position="118"/>
    </location>
    <ligand>
        <name>substrate</name>
    </ligand>
</feature>
<feature type="binding site" evidence="1">
    <location>
        <position position="152"/>
    </location>
    <ligand>
        <name>substrate</name>
    </ligand>
</feature>
<feature type="binding site" evidence="1">
    <location>
        <begin position="276"/>
        <end position="277"/>
    </location>
    <ligand>
        <name>substrate</name>
    </ligand>
</feature>
<feature type="binding site" evidence="1">
    <location>
        <position position="292"/>
    </location>
    <ligand>
        <name>substrate</name>
    </ligand>
</feature>
<feature type="binding site" evidence="1">
    <location>
        <position position="293"/>
    </location>
    <ligand>
        <name>Ca(2+)</name>
        <dbReference type="ChEBI" id="CHEBI:29108"/>
    </ligand>
</feature>
<feature type="binding site" evidence="1">
    <location>
        <position position="297"/>
    </location>
    <ligand>
        <name>Ca(2+)</name>
        <dbReference type="ChEBI" id="CHEBI:29108"/>
    </ligand>
</feature>
<feature type="binding site" evidence="1">
    <location>
        <position position="324"/>
    </location>
    <ligand>
        <name>Ca(2+)</name>
        <dbReference type="ChEBI" id="CHEBI:29108"/>
    </ligand>
</feature>
<feature type="binding site" evidence="1">
    <location>
        <position position="371"/>
    </location>
    <ligand>
        <name>substrate</name>
    </ligand>
</feature>
<feature type="glycosylation site" description="N-linked (GlcNAc...) asparagine; by host" evidence="1">
    <location>
        <position position="61"/>
    </location>
</feature>
<feature type="glycosylation site" description="N-linked (GlcNAc...) asparagine; by host" evidence="1">
    <location>
        <position position="70"/>
    </location>
</feature>
<feature type="glycosylation site" description="N-linked (GlcNAc...) asparagine; by host" evidence="1">
    <location>
        <position position="86"/>
    </location>
</feature>
<feature type="glycosylation site" description="N-linked (GlcNAc...) asparagine; by host" evidence="1">
    <location>
        <position position="146"/>
    </location>
</feature>
<feature type="glycosylation site" description="N-linked (GlcNAc...) asparagine; by host" evidence="1">
    <location>
        <position position="200"/>
    </location>
</feature>
<feature type="glycosylation site" description="N-linked (GlcNAc...) asparagine; by host" evidence="1">
    <location>
        <position position="234"/>
    </location>
</feature>
<feature type="glycosylation site" description="N-linked (GlcNAc...) asparagine; by host" evidence="1">
    <location>
        <position position="402"/>
    </location>
</feature>
<feature type="disulfide bond" evidence="1">
    <location>
        <begin position="92"/>
        <end position="417"/>
    </location>
</feature>
<feature type="disulfide bond" evidence="1">
    <location>
        <begin position="124"/>
        <end position="129"/>
    </location>
</feature>
<feature type="disulfide bond" evidence="1">
    <location>
        <begin position="183"/>
        <end position="230"/>
    </location>
</feature>
<feature type="disulfide bond" evidence="1">
    <location>
        <begin position="232"/>
        <end position="237"/>
    </location>
</feature>
<feature type="disulfide bond" evidence="1">
    <location>
        <begin position="278"/>
        <end position="291"/>
    </location>
</feature>
<feature type="disulfide bond" evidence="1">
    <location>
        <begin position="280"/>
        <end position="289"/>
    </location>
</feature>
<feature type="disulfide bond" evidence="1">
    <location>
        <begin position="318"/>
        <end position="337"/>
    </location>
</feature>
<feature type="disulfide bond" evidence="1">
    <location>
        <begin position="421"/>
        <end position="447"/>
    </location>
</feature>
<sequence length="469" mass="52141">MNPNQKIITIGSVSLTIATICFLMQIAILVTTVTLHFKQYECSSPPNNQVMPCEPIIIERNITEIVYLTNTTIDKEICPKLVEYRNWSKPQCKITGFAPFSKDNSIRLSAGGGIWVTREPYVSCDPGKCYQFALGQGTTLDNKHSNDTIHDRTPYRTLLMNELGVPFHLGTRQVCIAWSSSSCHDGKAWLHVCVTGYDKNATASFIYDGRLVDSIGSWSKNILRTQESECVCINGTCTVVMTDGSASERADTKILFIEEGKIVHISPLSGSAQHVEECSCYPRYPGVRCVCRDNWKGSNRPVVDINVKDYSIVSSYVCSGLVGDTPRKNDRSSSSYCRNPNNEKGNHGVKGWAFDDGNDVWMGRTISEESRSGYETFKVIGGWSTPNSKLQINRQVIVDSDNRSGYSGIFSVEGKSCINRCFYVELIRGREQETRVWWTSNSIVVFCGTSGTYGTGSWPDGADINLMPI</sequence>
<name>NRAM_I79A0</name>